<sequence>MKSKSIIAQLLYVLIAFMAVSCVADKSEPCPSGEPTRVSGSIVSLEHHGLRGASADKENSVERLELWVFDEDGHFLERAVADLSGSTFTAKIIPSEVERRIHFIANYELADPSVWVGRSEREMLPSISVADDLETIRMWARISYPSIAPNQNLGQIQLLRNMAKFSLSVTPPAESKLYDASYALYNSWNKGTLAPFDPNTGSFPQGQITEPAGVVFANPTSEAAFKEADGAHFFYGFERDQSNIGTGAGITCLILKARYNLPNADYTYYKLDFVDTNKVRYNITRNHFYKMILKKAKAPGRPTLQEALDGAAANNIFLSAEVQALPAFSDGSGMLTVDHTYMVFVQGEPSGTFQATYIPQGQNNPDYSKLTVSVSTPTGQQAAVTSAQHEGNGKIKLTLAQQENLTKRSDVVIGVQGNPDLKRSVTVLVREKYQYVFFKANTSSAENNQVTTQISAGQGNELLISAKLPDVLNAALLPITFKVYTEHFYPKTGGMILGIEGGKTLYKYVLTTMPQNKELQFRFKSNKVNSAENIAVKMDYFHDQTIHVTN</sequence>
<comment type="function">
    <text evidence="1">Probably a component of the fimbrium tip; required for incorporation of FimC and FimD into fimbriae. These long, filamentous pili are attached to the cell surface; they mediate biofilm formation, adhesion onto host cells and onto other bacteria that are part of the oral microbiome. They play an important role in invasion of periodontal tissues and are major virulence factors. FimC, FimD and FimE contribute to interaction with host CXCR4 and thereby down-regulate the TLR2-mediated host immune response.</text>
</comment>
<comment type="subunit">
    <text evidence="1">Fimbriae are composed of a major, structural subunit and the minor components FimC, FimD and FimE. Identified in a complex composed of FimC, FimD and FimE (in vitro). Does not directly interact with host proteins, but only as a complex with FimC and FimD.</text>
</comment>
<comment type="subcellular location">
    <subcellularLocation>
        <location evidence="1">Fimbrium</location>
    </subcellularLocation>
    <subcellularLocation>
        <location evidence="1">Cell outer membrane</location>
    </subcellularLocation>
    <text evidence="1 4">Probably synthesized as a palmitoylated precursor. Efficient export to the outer membrane and integration into fimbriae requires lipidation and subsequent proteolytic removal of the lipidated propeptide (Probable). Probably part of the fimbrium tip, as a part of the complex formed by FimC, FimD and FimE (By similarity).</text>
</comment>
<comment type="miscellaneous">
    <text evidence="4">The name (major fimbrium subunit) does not indicate the abundance of the protein, but is derived from the greater length of the major fimbriae. In strain ATCC 33277 and strain ATCC BAA-1703 / FDC 381, major fimbriae are 300 - 1600 nM in length and about 5 nm in diameter. In contrast, minor fimbriae are only about 80 - 120 nm long. This length difference is observed only in a small number of strains, including strain ATCC 33277 and strain ATCC BAA-1703 / FDC 381, and is due to a loss of function mutation in FimB, a protein that restricts fimbrial length in other strains.</text>
</comment>
<comment type="similarity">
    <text evidence="4">Belongs to the FimE family.</text>
</comment>
<dbReference type="EMBL" id="D42067">
    <property type="protein sequence ID" value="BAA22418.2"/>
    <property type="molecule type" value="Genomic_DNA"/>
</dbReference>
<dbReference type="RefSeq" id="WP_012457311.1">
    <property type="nucleotide sequence ID" value="NZ_JAVIVL010000003.1"/>
</dbReference>
<dbReference type="GO" id="GO:0009279">
    <property type="term" value="C:cell outer membrane"/>
    <property type="evidence" value="ECO:0007669"/>
    <property type="project" value="UniProtKB-SubCell"/>
</dbReference>
<dbReference type="GO" id="GO:0009289">
    <property type="term" value="C:pilus"/>
    <property type="evidence" value="ECO:0000250"/>
    <property type="project" value="UniProtKB"/>
</dbReference>
<dbReference type="GO" id="GO:0046810">
    <property type="term" value="F:host cell extracellular matrix binding"/>
    <property type="evidence" value="ECO:0000250"/>
    <property type="project" value="UniProtKB"/>
</dbReference>
<dbReference type="GO" id="GO:0098609">
    <property type="term" value="P:cell-cell adhesion"/>
    <property type="evidence" value="ECO:0000250"/>
    <property type="project" value="UniProtKB"/>
</dbReference>
<dbReference type="PROSITE" id="PS51257">
    <property type="entry name" value="PROKAR_LIPOPROTEIN"/>
    <property type="match status" value="1"/>
</dbReference>
<feature type="signal peptide" evidence="3">
    <location>
        <begin position="1"/>
        <end position="21"/>
    </location>
</feature>
<feature type="propeptide" id="PRO_0000436744" evidence="2">
    <location>
        <begin position="22"/>
        <end position="51"/>
    </location>
</feature>
<feature type="chain" id="PRO_5004158230" description="Major fimbrium tip subunit FimE">
    <location>
        <begin position="52"/>
        <end position="550"/>
    </location>
</feature>
<feature type="lipid moiety-binding region" description="N-palmitoyl cysteine" evidence="3">
    <location>
        <position position="22"/>
    </location>
</feature>
<feature type="lipid moiety-binding region" description="S-diacylglycerol cysteine" evidence="3">
    <location>
        <position position="22"/>
    </location>
</feature>
<protein>
    <recommendedName>
        <fullName>Major fimbrium tip subunit FimE</fullName>
    </recommendedName>
</protein>
<name>FIME_PORGN</name>
<accession>O32390</accession>
<organism evidence="5">
    <name type="scientific">Porphyromonas gingivalis</name>
    <name type="common">Bacteroides gingivalis</name>
    <dbReference type="NCBI Taxonomy" id="837"/>
    <lineage>
        <taxon>Bacteria</taxon>
        <taxon>Pseudomonadati</taxon>
        <taxon>Bacteroidota</taxon>
        <taxon>Bacteroidia</taxon>
        <taxon>Bacteroidales</taxon>
        <taxon>Porphyromonadaceae</taxon>
        <taxon>Porphyromonas</taxon>
    </lineage>
</organism>
<keyword id="KW-0998">Cell outer membrane</keyword>
<keyword id="KW-0281">Fimbrium</keyword>
<keyword id="KW-0449">Lipoprotein</keyword>
<keyword id="KW-0472">Membrane</keyword>
<keyword id="KW-0564">Palmitate</keyword>
<keyword id="KW-0732">Signal</keyword>
<keyword id="KW-0843">Virulence</keyword>
<proteinExistence type="inferred from homology"/>
<gene>
    <name evidence="5" type="primary">fimE</name>
</gene>
<reference evidence="5" key="1">
    <citation type="journal article" date="1996" name="Microbiol. Immunol.">
        <title>Sequence and product analyses of the four genes downstream from the fimbrilin gene(fimA) of the oral anaerobe Porphyromonas gingivalis.</title>
        <authorList>
            <person name="Watanabe K."/>
            <person name="Onoe T."/>
            <person name="Ozeki M."/>
            <person name="Shimizu Y."/>
            <person name="Sakayori T."/>
            <person name="Nakamura H."/>
            <person name="Yoshimura F."/>
        </authorList>
    </citation>
    <scope>NUCLEOTIDE SEQUENCE [GENOMIC DNA]</scope>
    <source>
        <strain evidence="5">ATCC BAA-1703 / FDC 381</strain>
    </source>
</reference>
<reference evidence="5" key="2">
    <citation type="journal article" date="2007" name="Microbiology">
        <title>Involvement of minor components associated with the FimA fimbriae of Porphyromonas gingivalis in adhesive functions.</title>
        <authorList>
            <person name="Nishiyama S."/>
            <person name="Murakami Y."/>
            <person name="Nagata H."/>
            <person name="Shizukuishi S."/>
            <person name="Kawagishi I."/>
            <person name="Yoshimura F."/>
        </authorList>
    </citation>
    <scope>NUCLEOTIDE SEQUENCE [GENOMIC DNA]</scope>
    <source>
        <strain evidence="5">ATCC BAA-1703 / FDC 381</strain>
    </source>
</reference>
<evidence type="ECO:0000250" key="1">
    <source>
        <dbReference type="UniProtKB" id="B2RH59"/>
    </source>
</evidence>
<evidence type="ECO:0000255" key="2"/>
<evidence type="ECO:0000255" key="3">
    <source>
        <dbReference type="PROSITE-ProRule" id="PRU00303"/>
    </source>
</evidence>
<evidence type="ECO:0000305" key="4"/>
<evidence type="ECO:0000312" key="5">
    <source>
        <dbReference type="EMBL" id="BAA22418.2"/>
    </source>
</evidence>